<evidence type="ECO:0000250" key="1">
    <source>
        <dbReference type="UniProtKB" id="P38153"/>
    </source>
</evidence>
<evidence type="ECO:0000250" key="2">
    <source>
        <dbReference type="UniProtKB" id="Q9WVP1"/>
    </source>
</evidence>
<evidence type="ECO:0000255" key="3">
    <source>
        <dbReference type="PROSITE-ProRule" id="PRU00404"/>
    </source>
</evidence>
<evidence type="ECO:0000269" key="4">
    <source>
    </source>
</evidence>
<evidence type="ECO:0000269" key="5">
    <source>
    </source>
</evidence>
<evidence type="ECO:0000303" key="6">
    <source>
    </source>
</evidence>
<evidence type="ECO:0000305" key="7"/>
<evidence type="ECO:0000305" key="8">
    <source>
    </source>
</evidence>
<evidence type="ECO:0000305" key="9">
    <source>
    </source>
</evidence>
<evidence type="ECO:0000312" key="10">
    <source>
        <dbReference type="WormBase" id="K11D2.3a"/>
    </source>
</evidence>
<evidence type="ECO:0000312" key="11">
    <source>
        <dbReference type="WormBase" id="K11D2.3b"/>
    </source>
</evidence>
<protein>
    <recommendedName>
        <fullName>AP-1 complex subunit mu-1-I</fullName>
    </recommendedName>
    <alternativeName>
        <fullName>Clathrin assembly protein complex 1 mu-1-I medium chain</fullName>
    </alternativeName>
    <alternativeName>
        <fullName>Clathrin coat assembly protein AP47</fullName>
    </alternativeName>
    <alternativeName>
        <fullName>Clathrin coat-associated protein AP47</fullName>
    </alternativeName>
    <alternativeName>
        <fullName>Golgi adaptor AP-1 47 kDa protein</fullName>
    </alternativeName>
    <alternativeName>
        <fullName>HA1 47 kDa subunit</fullName>
    </alternativeName>
    <alternativeName>
        <fullName>Mu1-I-adaptin</fullName>
    </alternativeName>
    <alternativeName>
        <fullName>Uncoordinated protein 101</fullName>
    </alternativeName>
</protein>
<feature type="chain" id="PRO_0000193789" description="AP-1 complex subunit mu-1-I">
    <location>
        <begin position="1"/>
        <end position="422"/>
    </location>
</feature>
<feature type="domain" description="MHD" evidence="3">
    <location>
        <begin position="167"/>
        <end position="420"/>
    </location>
</feature>
<feature type="splice variant" id="VSP_020097" description="In isoform b." evidence="7">
    <location>
        <begin position="1"/>
        <end position="364"/>
    </location>
</feature>
<feature type="sequence conflict" description="In Ref. 1; AAA72418." evidence="7" ref="1">
    <original>S</original>
    <variation>R</variation>
    <location>
        <position position="400"/>
    </location>
</feature>
<keyword id="KW-0025">Alternative splicing</keyword>
<keyword id="KW-0966">Cell projection</keyword>
<keyword id="KW-0968">Cytoplasmic vesicle</keyword>
<keyword id="KW-0333">Golgi apparatus</keyword>
<keyword id="KW-0472">Membrane</keyword>
<keyword id="KW-0653">Protein transport</keyword>
<keyword id="KW-1185">Reference proteome</keyword>
<keyword id="KW-0813">Transport</keyword>
<proteinExistence type="evidence at protein level"/>
<comment type="function">
    <text evidence="4 5 9">Component of the adaptor complexes which link clathrin to receptors in coated vesicles (Probable). Clathrin-associated protein complexes are believed to interact with the cytoplasmic tails of membrane proteins, leading to their selection and concentration (Probable). Required for many aspects of development and behavior, including negative regulation of vulval differentiation (PubMed:8288128). Required for the dendritic localization of potassium channel kvs-4 in the cholinergic motor neuron DA9 (PubMed:26762178).</text>
</comment>
<comment type="subunit">
    <text evidence="2 4">Adaptor protein complex 1 (AP-1) is a heterotetramer composed of two large adaptins (gamma- and beta'-type subunits), a medium adaptin (mu-type subunit AP47) and a small adaptin (sigma-type subunit AP19) (By similarity). Interacts (via N-terminus) with kvs-4 (PubMed:26762178).</text>
</comment>
<comment type="subcellular location">
    <subcellularLocation>
        <location evidence="4">Golgi apparatus</location>
    </subcellularLocation>
    <subcellularLocation>
        <location evidence="6">Cytoplasmic vesicle</location>
        <location evidence="6">Clathrin-coated vesicle membrane</location>
        <topology evidence="1">Peripheral membrane protein</topology>
        <orientation evidence="1">Cytoplasmic side</orientation>
    </subcellularLocation>
    <subcellularLocation>
        <location evidence="8">Cell projection</location>
        <location evidence="8">Dendrite</location>
    </subcellularLocation>
    <text evidence="1 8">Component of the coat surrounding the cytoplasmic face of coated vesicles located at the Golgi complex (By similarity). Association with kvs-4, targets kvs-4 to dendrites (PubMed:26762178).</text>
</comment>
<comment type="alternative products">
    <event type="alternative splicing"/>
    <isoform>
        <id>P35602-1</id>
        <name evidence="10">a</name>
        <sequence type="displayed"/>
    </isoform>
    <isoform>
        <id>P35602-2</id>
        <name evidence="11">b</name>
        <sequence type="described" ref="VSP_020097"/>
    </isoform>
</comment>
<comment type="tissue specificity">
    <text evidence="4">Expressed in the cholinergic motor neuron DA9.</text>
</comment>
<comment type="similarity">
    <text evidence="7">Belongs to the adaptor complexes medium subunit family.</text>
</comment>
<gene>
    <name type="primary">unc-101</name>
    <name type="ORF">K11D2.3</name>
</gene>
<accession>P35602</accession>
<accession>O02282</accession>
<accession>Q1ZXR6</accession>
<reference key="1">
    <citation type="journal article" date="1994" name="Genes Dev.">
        <title>unc-101, a gene required for many aspects of Caenorhabditis elegans development and behavior, encodes a clathrin-associated protein.</title>
        <authorList>
            <person name="Lee J."/>
            <person name="Jongeward G.D."/>
            <person name="Sternberg P.W."/>
        </authorList>
    </citation>
    <scope>NUCLEOTIDE SEQUENCE [MRNA] (ISOFORM A)</scope>
    <scope>FUNCTION</scope>
    <scope>SUBCELLULAR LOCATION</scope>
    <source>
        <strain>Bristol N2</strain>
    </source>
</reference>
<reference key="2">
    <citation type="journal article" date="1998" name="Science">
        <title>Genome sequence of the nematode C. elegans: a platform for investigating biology.</title>
        <authorList>
            <consortium name="The C. elegans sequencing consortium"/>
        </authorList>
    </citation>
    <scope>NUCLEOTIDE SEQUENCE [LARGE SCALE GENOMIC DNA]</scope>
    <source>
        <strain>Bristol N2</strain>
    </source>
</reference>
<reference key="3">
    <citation type="journal article" date="2016" name="FEBS Lett.">
        <title>A novel bipartite UNC-101/AP-1 mu1 binding signal mediates KVS-4/Kv2.1 somatodendritic distribution in Caenorhabditis elegans.</title>
        <authorList>
            <person name="Zhou X."/>
            <person name="Zeng J."/>
            <person name="Ouyang C."/>
            <person name="Luo Q."/>
            <person name="Yu M."/>
            <person name="Yang Z."/>
            <person name="Wang H."/>
            <person name="Shen K."/>
            <person name="Shi A."/>
        </authorList>
    </citation>
    <scope>FUNCTION</scope>
    <scope>INTERACTION WITH KVS-4</scope>
    <scope>SUBCELLULAR LOCATION</scope>
    <scope>TISSUE SPECIFICITY</scope>
</reference>
<sequence>MATSAMFILDLKGKTIISRNYRGDIDMTAIDKFIHLLMEKEEEGSAAPVLTYQDTNFVFIKHTNIYLVSACRSNVNVTMILSFLYKCVEVFSEYFKDVEEESVRDNFVVIYELLDEMMDFGFPQTTESRILQEYITQEGQKLISAPRPPMAVTNAVSWRSEGIKYRKNEVFLDVIESVNMLASANGTVLQSEIVGSVKMRVYLTGMPELRLGLNDKVLFEGSGRGKSKSVELEDVKFHQCVRLSRFDTDRTISFIPPDGAFELMSYRLTTVVKPLIWIETSIERHSHSRVSFIIKAKSQFKRRSTANNVEIIIPVPSDADSPKFKTSIGSVKYTPEQSAFVWTIKNFPGGKEYLLTAHLSLPSVMSEESEGRPPIKVKFEIPYFTTSGIQVRYLKIIEKSGYQALPWVRYITQNGEYEMRMK</sequence>
<name>AP1M_CAEEL</name>
<organism>
    <name type="scientific">Caenorhabditis elegans</name>
    <dbReference type="NCBI Taxonomy" id="6239"/>
    <lineage>
        <taxon>Eukaryota</taxon>
        <taxon>Metazoa</taxon>
        <taxon>Ecdysozoa</taxon>
        <taxon>Nematoda</taxon>
        <taxon>Chromadorea</taxon>
        <taxon>Rhabditida</taxon>
        <taxon>Rhabditina</taxon>
        <taxon>Rhabditomorpha</taxon>
        <taxon>Rhabditoidea</taxon>
        <taxon>Rhabditidae</taxon>
        <taxon>Peloderinae</taxon>
        <taxon>Caenorhabditis</taxon>
    </lineage>
</organism>
<dbReference type="EMBL" id="L26291">
    <property type="protein sequence ID" value="AAA72418.1"/>
    <property type="molecule type" value="mRNA"/>
</dbReference>
<dbReference type="EMBL" id="Z83115">
    <property type="protein sequence ID" value="CAB05557.3"/>
    <property type="molecule type" value="Genomic_DNA"/>
</dbReference>
<dbReference type="EMBL" id="Z83115">
    <property type="protein sequence ID" value="CAJ85757.1"/>
    <property type="molecule type" value="Genomic_DNA"/>
</dbReference>
<dbReference type="PIR" id="A49837">
    <property type="entry name" value="A49837"/>
</dbReference>
<dbReference type="PIR" id="T23603">
    <property type="entry name" value="T23603"/>
</dbReference>
<dbReference type="RefSeq" id="NP_001040675.1">
    <molecule id="P35602-1"/>
    <property type="nucleotide sequence ID" value="NM_001047210.4"/>
</dbReference>
<dbReference type="RefSeq" id="NP_001040676.1">
    <molecule id="P35602-2"/>
    <property type="nucleotide sequence ID" value="NM_001047211.3"/>
</dbReference>
<dbReference type="SMR" id="P35602"/>
<dbReference type="BioGRID" id="38518">
    <property type="interactions" value="14"/>
</dbReference>
<dbReference type="FunCoup" id="P35602">
    <property type="interactions" value="2055"/>
</dbReference>
<dbReference type="IntAct" id="P35602">
    <property type="interactions" value="9"/>
</dbReference>
<dbReference type="MINT" id="P35602"/>
<dbReference type="STRING" id="6239.K11D2.3a.2"/>
<dbReference type="PaxDb" id="6239-K11D2.3a.2"/>
<dbReference type="PeptideAtlas" id="P35602"/>
<dbReference type="EnsemblMetazoa" id="K11D2.3a.1">
    <molecule id="P35602-1"/>
    <property type="protein sequence ID" value="K11D2.3a.1"/>
    <property type="gene ID" value="WBGene00006829"/>
</dbReference>
<dbReference type="EnsemblMetazoa" id="K11D2.3b.1">
    <molecule id="P35602-2"/>
    <property type="protein sequence ID" value="K11D2.3b.1"/>
    <property type="gene ID" value="WBGene00006829"/>
</dbReference>
<dbReference type="GeneID" id="173121"/>
<dbReference type="KEGG" id="cel:CELE_K11D2.3"/>
<dbReference type="UCSC" id="K11D2.3a.1">
    <molecule id="P35602-1"/>
    <property type="organism name" value="c. elegans"/>
</dbReference>
<dbReference type="AGR" id="WB:WBGene00006829"/>
<dbReference type="CTD" id="173121"/>
<dbReference type="WormBase" id="K11D2.3a">
    <molecule id="P35602-1"/>
    <property type="protein sequence ID" value="CE28050"/>
    <property type="gene ID" value="WBGene00006829"/>
    <property type="gene designation" value="unc-101"/>
</dbReference>
<dbReference type="WormBase" id="K11D2.3b">
    <molecule id="P35602-2"/>
    <property type="protein sequence ID" value="CE40095"/>
    <property type="gene ID" value="WBGene00006829"/>
    <property type="gene designation" value="unc-101"/>
</dbReference>
<dbReference type="eggNOG" id="KOG0937">
    <property type="taxonomic scope" value="Eukaryota"/>
</dbReference>
<dbReference type="GeneTree" id="ENSGT00940000157924"/>
<dbReference type="HOGENOM" id="CLU_026996_0_0_1"/>
<dbReference type="InParanoid" id="P35602"/>
<dbReference type="OMA" id="KPLIWCD"/>
<dbReference type="OrthoDB" id="10259133at2759"/>
<dbReference type="PhylomeDB" id="P35602"/>
<dbReference type="Reactome" id="R-CEL-432720">
    <property type="pathway name" value="Lysosome Vesicle Biogenesis"/>
</dbReference>
<dbReference type="Reactome" id="R-CEL-432722">
    <property type="pathway name" value="Golgi Associated Vesicle Biogenesis"/>
</dbReference>
<dbReference type="Reactome" id="R-CEL-6798695">
    <property type="pathway name" value="Neutrophil degranulation"/>
</dbReference>
<dbReference type="SignaLink" id="P35602"/>
<dbReference type="PRO" id="PR:P35602"/>
<dbReference type="Proteomes" id="UP000001940">
    <property type="component" value="Chromosome I"/>
</dbReference>
<dbReference type="Bgee" id="WBGene00006829">
    <property type="expression patterns" value="Expressed in germ line (C elegans) and 4 other cell types or tissues"/>
</dbReference>
<dbReference type="ExpressionAtlas" id="P35602">
    <property type="expression patterns" value="baseline and differential"/>
</dbReference>
<dbReference type="GO" id="GO:0030121">
    <property type="term" value="C:AP-1 adaptor complex"/>
    <property type="evidence" value="ECO:0000303"/>
    <property type="project" value="UniProtKB"/>
</dbReference>
<dbReference type="GO" id="GO:0030136">
    <property type="term" value="C:clathrin-coated vesicle"/>
    <property type="evidence" value="ECO:0000318"/>
    <property type="project" value="GO_Central"/>
</dbReference>
<dbReference type="GO" id="GO:0030425">
    <property type="term" value="C:dendrite"/>
    <property type="evidence" value="ECO:0007669"/>
    <property type="project" value="UniProtKB-SubCell"/>
</dbReference>
<dbReference type="GO" id="GO:0035615">
    <property type="term" value="F:clathrin adaptor activity"/>
    <property type="evidence" value="ECO:0000318"/>
    <property type="project" value="GO_Central"/>
</dbReference>
<dbReference type="GO" id="GO:0045176">
    <property type="term" value="P:apical protein localization"/>
    <property type="evidence" value="ECO:0000316"/>
    <property type="project" value="WormBase"/>
</dbReference>
<dbReference type="GO" id="GO:0060271">
    <property type="term" value="P:cilium assembly"/>
    <property type="evidence" value="ECO:0000315"/>
    <property type="project" value="WormBase"/>
</dbReference>
<dbReference type="GO" id="GO:0009792">
    <property type="term" value="P:embryo development ending in birth or egg hatching"/>
    <property type="evidence" value="ECO:0000316"/>
    <property type="project" value="WormBase"/>
</dbReference>
<dbReference type="GO" id="GO:0006886">
    <property type="term" value="P:intracellular protein transport"/>
    <property type="evidence" value="ECO:0000303"/>
    <property type="project" value="UniProtKB"/>
</dbReference>
<dbReference type="GO" id="GO:0002119">
    <property type="term" value="P:nematode larval development"/>
    <property type="evidence" value="ECO:0000316"/>
    <property type="project" value="WormBase"/>
</dbReference>
<dbReference type="GO" id="GO:0097500">
    <property type="term" value="P:receptor localization to non-motile cilium"/>
    <property type="evidence" value="ECO:0000315"/>
    <property type="project" value="WormBase"/>
</dbReference>
<dbReference type="GO" id="GO:0016192">
    <property type="term" value="P:vesicle-mediated transport"/>
    <property type="evidence" value="ECO:0000318"/>
    <property type="project" value="GO_Central"/>
</dbReference>
<dbReference type="GO" id="GO:0040025">
    <property type="term" value="P:vulval development"/>
    <property type="evidence" value="ECO:0000303"/>
    <property type="project" value="UniProtKB"/>
</dbReference>
<dbReference type="CDD" id="cd09258">
    <property type="entry name" value="AP-1_Mu1A_Cterm"/>
    <property type="match status" value="1"/>
</dbReference>
<dbReference type="CDD" id="cd14835">
    <property type="entry name" value="AP1_Mu_N"/>
    <property type="match status" value="1"/>
</dbReference>
<dbReference type="FunFam" id="3.30.450.60:FF:000006">
    <property type="entry name" value="AP-1 complex subunit mu-1 isoform 1"/>
    <property type="match status" value="1"/>
</dbReference>
<dbReference type="Gene3D" id="3.30.450.60">
    <property type="match status" value="1"/>
</dbReference>
<dbReference type="Gene3D" id="2.60.40.1170">
    <property type="entry name" value="Mu homology domain, subdomain B"/>
    <property type="match status" value="2"/>
</dbReference>
<dbReference type="InterPro" id="IPR050431">
    <property type="entry name" value="Adaptor_comp_med_subunit"/>
</dbReference>
<dbReference type="InterPro" id="IPR036168">
    <property type="entry name" value="AP2_Mu_C_sf"/>
</dbReference>
<dbReference type="InterPro" id="IPR022775">
    <property type="entry name" value="AP_mu_sigma_su"/>
</dbReference>
<dbReference type="InterPro" id="IPR001392">
    <property type="entry name" value="Clathrin_mu"/>
</dbReference>
<dbReference type="InterPro" id="IPR018240">
    <property type="entry name" value="Clathrin_mu_CS"/>
</dbReference>
<dbReference type="InterPro" id="IPR011012">
    <property type="entry name" value="Longin-like_dom_sf"/>
</dbReference>
<dbReference type="InterPro" id="IPR028565">
    <property type="entry name" value="MHD"/>
</dbReference>
<dbReference type="PANTHER" id="PTHR10529">
    <property type="entry name" value="AP COMPLEX SUBUNIT MU"/>
    <property type="match status" value="1"/>
</dbReference>
<dbReference type="Pfam" id="PF00928">
    <property type="entry name" value="Adap_comp_sub"/>
    <property type="match status" value="1"/>
</dbReference>
<dbReference type="Pfam" id="PF01217">
    <property type="entry name" value="Clat_adaptor_s"/>
    <property type="match status" value="1"/>
</dbReference>
<dbReference type="PIRSF" id="PIRSF005992">
    <property type="entry name" value="Clathrin_mu"/>
    <property type="match status" value="1"/>
</dbReference>
<dbReference type="PRINTS" id="PR00314">
    <property type="entry name" value="CLATHRINADPT"/>
</dbReference>
<dbReference type="SUPFAM" id="SSF49447">
    <property type="entry name" value="Second domain of Mu2 adaptin subunit (ap50) of ap2 adaptor"/>
    <property type="match status" value="1"/>
</dbReference>
<dbReference type="SUPFAM" id="SSF64356">
    <property type="entry name" value="SNARE-like"/>
    <property type="match status" value="1"/>
</dbReference>
<dbReference type="PROSITE" id="PS00990">
    <property type="entry name" value="CLAT_ADAPTOR_M_1"/>
    <property type="match status" value="1"/>
</dbReference>
<dbReference type="PROSITE" id="PS00991">
    <property type="entry name" value="CLAT_ADAPTOR_M_2"/>
    <property type="match status" value="1"/>
</dbReference>
<dbReference type="PROSITE" id="PS51072">
    <property type="entry name" value="MHD"/>
    <property type="match status" value="1"/>
</dbReference>